<organism>
    <name type="scientific">Nitrobacter hamburgensis (strain DSM 10229 / NCIMB 13809 / X14)</name>
    <dbReference type="NCBI Taxonomy" id="323097"/>
    <lineage>
        <taxon>Bacteria</taxon>
        <taxon>Pseudomonadati</taxon>
        <taxon>Pseudomonadota</taxon>
        <taxon>Alphaproteobacteria</taxon>
        <taxon>Hyphomicrobiales</taxon>
        <taxon>Nitrobacteraceae</taxon>
        <taxon>Nitrobacter</taxon>
    </lineage>
</organism>
<feature type="chain" id="PRO_0000316705" description="Putative pyruvate, phosphate dikinase regulatory protein">
    <location>
        <begin position="1"/>
        <end position="280"/>
    </location>
</feature>
<feature type="binding site" evidence="1">
    <location>
        <begin position="154"/>
        <end position="161"/>
    </location>
    <ligand>
        <name>ADP</name>
        <dbReference type="ChEBI" id="CHEBI:456216"/>
    </ligand>
</feature>
<comment type="function">
    <text evidence="1">Bifunctional serine/threonine kinase and phosphorylase involved in the regulation of the pyruvate, phosphate dikinase (PPDK) by catalyzing its phosphorylation/dephosphorylation.</text>
</comment>
<comment type="catalytic activity">
    <reaction evidence="1">
        <text>N(tele)-phospho-L-histidyl/L-threonyl-[pyruvate, phosphate dikinase] + ADP = N(tele)-phospho-L-histidyl/O-phospho-L-threonyl-[pyruvate, phosphate dikinase] + AMP + H(+)</text>
        <dbReference type="Rhea" id="RHEA:43692"/>
        <dbReference type="Rhea" id="RHEA-COMP:10650"/>
        <dbReference type="Rhea" id="RHEA-COMP:10651"/>
        <dbReference type="ChEBI" id="CHEBI:15378"/>
        <dbReference type="ChEBI" id="CHEBI:30013"/>
        <dbReference type="ChEBI" id="CHEBI:61977"/>
        <dbReference type="ChEBI" id="CHEBI:83586"/>
        <dbReference type="ChEBI" id="CHEBI:456215"/>
        <dbReference type="ChEBI" id="CHEBI:456216"/>
        <dbReference type="EC" id="2.7.11.32"/>
    </reaction>
</comment>
<comment type="catalytic activity">
    <reaction evidence="1">
        <text>N(tele)-phospho-L-histidyl/O-phospho-L-threonyl-[pyruvate, phosphate dikinase] + phosphate + H(+) = N(tele)-phospho-L-histidyl/L-threonyl-[pyruvate, phosphate dikinase] + diphosphate</text>
        <dbReference type="Rhea" id="RHEA:43696"/>
        <dbReference type="Rhea" id="RHEA-COMP:10650"/>
        <dbReference type="Rhea" id="RHEA-COMP:10651"/>
        <dbReference type="ChEBI" id="CHEBI:15378"/>
        <dbReference type="ChEBI" id="CHEBI:30013"/>
        <dbReference type="ChEBI" id="CHEBI:33019"/>
        <dbReference type="ChEBI" id="CHEBI:43474"/>
        <dbReference type="ChEBI" id="CHEBI:61977"/>
        <dbReference type="ChEBI" id="CHEBI:83586"/>
        <dbReference type="EC" id="2.7.4.27"/>
    </reaction>
</comment>
<comment type="similarity">
    <text evidence="1">Belongs to the pyruvate, phosphate/water dikinase regulatory protein family. PDRP subfamily.</text>
</comment>
<reference key="1">
    <citation type="submission" date="2006-03" db="EMBL/GenBank/DDBJ databases">
        <title>Complete sequence of chromosome of Nitrobacter hamburgensis X14.</title>
        <authorList>
            <consortium name="US DOE Joint Genome Institute"/>
            <person name="Copeland A."/>
            <person name="Lucas S."/>
            <person name="Lapidus A."/>
            <person name="Barry K."/>
            <person name="Detter J.C."/>
            <person name="Glavina del Rio T."/>
            <person name="Hammon N."/>
            <person name="Israni S."/>
            <person name="Dalin E."/>
            <person name="Tice H."/>
            <person name="Pitluck S."/>
            <person name="Chain P."/>
            <person name="Malfatti S."/>
            <person name="Shin M."/>
            <person name="Vergez L."/>
            <person name="Schmutz J."/>
            <person name="Larimer F."/>
            <person name="Land M."/>
            <person name="Hauser L."/>
            <person name="Kyrpides N."/>
            <person name="Ivanova N."/>
            <person name="Ward B."/>
            <person name="Arp D."/>
            <person name="Klotz M."/>
            <person name="Stein L."/>
            <person name="O'Mullan G."/>
            <person name="Starkenburg S."/>
            <person name="Sayavedra L."/>
            <person name="Poret-Peterson A.T."/>
            <person name="Gentry M.E."/>
            <person name="Bruce D."/>
            <person name="Richardson P."/>
        </authorList>
    </citation>
    <scope>NUCLEOTIDE SEQUENCE [LARGE SCALE GENOMIC DNA]</scope>
    <source>
        <strain>DSM 10229 / NCIMB 13809 / X14</strain>
    </source>
</reference>
<gene>
    <name type="ordered locus">Nham_0112</name>
</gene>
<name>PDRP_NITHX</name>
<dbReference type="EC" id="2.7.11.32" evidence="1"/>
<dbReference type="EC" id="2.7.4.27" evidence="1"/>
<dbReference type="EMBL" id="CP000319">
    <property type="protein sequence ID" value="ABE61013.1"/>
    <property type="molecule type" value="Genomic_DNA"/>
</dbReference>
<dbReference type="RefSeq" id="WP_011508720.1">
    <property type="nucleotide sequence ID" value="NC_007964.1"/>
</dbReference>
<dbReference type="SMR" id="Q1QRY4"/>
<dbReference type="STRING" id="323097.Nham_0112"/>
<dbReference type="KEGG" id="nha:Nham_0112"/>
<dbReference type="eggNOG" id="COG1806">
    <property type="taxonomic scope" value="Bacteria"/>
</dbReference>
<dbReference type="HOGENOM" id="CLU_046206_2_0_5"/>
<dbReference type="OrthoDB" id="9782201at2"/>
<dbReference type="Proteomes" id="UP000001953">
    <property type="component" value="Chromosome"/>
</dbReference>
<dbReference type="GO" id="GO:0043531">
    <property type="term" value="F:ADP binding"/>
    <property type="evidence" value="ECO:0007669"/>
    <property type="project" value="UniProtKB-UniRule"/>
</dbReference>
<dbReference type="GO" id="GO:0005524">
    <property type="term" value="F:ATP binding"/>
    <property type="evidence" value="ECO:0007669"/>
    <property type="project" value="InterPro"/>
</dbReference>
<dbReference type="GO" id="GO:0016776">
    <property type="term" value="F:phosphotransferase activity, phosphate group as acceptor"/>
    <property type="evidence" value="ECO:0007669"/>
    <property type="project" value="UniProtKB-UniRule"/>
</dbReference>
<dbReference type="GO" id="GO:0004674">
    <property type="term" value="F:protein serine/threonine kinase activity"/>
    <property type="evidence" value="ECO:0007669"/>
    <property type="project" value="UniProtKB-UniRule"/>
</dbReference>
<dbReference type="HAMAP" id="MF_00921">
    <property type="entry name" value="PDRP"/>
    <property type="match status" value="1"/>
</dbReference>
<dbReference type="InterPro" id="IPR005177">
    <property type="entry name" value="Kinase-pyrophosphorylase"/>
</dbReference>
<dbReference type="InterPro" id="IPR026565">
    <property type="entry name" value="PPDK_reg"/>
</dbReference>
<dbReference type="NCBIfam" id="NF003742">
    <property type="entry name" value="PRK05339.1"/>
    <property type="match status" value="1"/>
</dbReference>
<dbReference type="PANTHER" id="PTHR31756">
    <property type="entry name" value="PYRUVATE, PHOSPHATE DIKINASE REGULATORY PROTEIN 1, CHLOROPLASTIC"/>
    <property type="match status" value="1"/>
</dbReference>
<dbReference type="PANTHER" id="PTHR31756:SF3">
    <property type="entry name" value="PYRUVATE, PHOSPHATE DIKINASE REGULATORY PROTEIN 1, CHLOROPLASTIC"/>
    <property type="match status" value="1"/>
</dbReference>
<dbReference type="Pfam" id="PF03618">
    <property type="entry name" value="Kinase-PPPase"/>
    <property type="match status" value="1"/>
</dbReference>
<accession>Q1QRY4</accession>
<keyword id="KW-0418">Kinase</keyword>
<keyword id="KW-0547">Nucleotide-binding</keyword>
<keyword id="KW-1185">Reference proteome</keyword>
<keyword id="KW-0723">Serine/threonine-protein kinase</keyword>
<keyword id="KW-0808">Transferase</keyword>
<sequence length="280" mass="31180">MAPITGSNFHLHLVSDSTGETLITVSRAVVAQYANVTPVEHVYPLVRSQKQLDRVLAEIEEEPGIVLFTLLEKDLVERLEAKCQEINSPSLSIIGPVMQLFQAYLGAATIGRVGAQHTLNADYFRRIDALNYTMMHDDGQHVEGLEEADVVLVGVSRTSKTPTSIYLANRGIRTANVPLVPGIAIPRQLESLRTPLVVSLHAAPERLIQVRQNRLLSIGTRAGNDTYIDRQSVADEVTYARRLSAKHDWVQLDVTRRSIEETAAAIMKLFADRQRQRQPE</sequence>
<evidence type="ECO:0000255" key="1">
    <source>
        <dbReference type="HAMAP-Rule" id="MF_00921"/>
    </source>
</evidence>
<protein>
    <recommendedName>
        <fullName evidence="1">Putative pyruvate, phosphate dikinase regulatory protein</fullName>
        <shortName evidence="1">PPDK regulatory protein</shortName>
        <ecNumber evidence="1">2.7.11.32</ecNumber>
        <ecNumber evidence="1">2.7.4.27</ecNumber>
    </recommendedName>
</protein>
<proteinExistence type="inferred from homology"/>